<organism>
    <name type="scientific">Coccidioides immitis (strain RS)</name>
    <name type="common">Valley fever fungus</name>
    <dbReference type="NCBI Taxonomy" id="246410"/>
    <lineage>
        <taxon>Eukaryota</taxon>
        <taxon>Fungi</taxon>
        <taxon>Dikarya</taxon>
        <taxon>Ascomycota</taxon>
        <taxon>Pezizomycotina</taxon>
        <taxon>Eurotiomycetes</taxon>
        <taxon>Eurotiomycetidae</taxon>
        <taxon>Onygenales</taxon>
        <taxon>Onygenaceae</taxon>
        <taxon>Coccidioides</taxon>
    </lineage>
</organism>
<gene>
    <name type="primary">MRH4</name>
    <name type="ORF">CIMG_00846</name>
</gene>
<proteinExistence type="inferred from homology"/>
<sequence length="656" mass="73735">MTSFSHLSRLRMSAFLPHVCLQCRLKTVSSLPAQSSASSLLQAVRHASSARPRRRTPSRMTLSPNVAQSTVKYGEKRKSVRHQNGPFGGMNQRRANLRDRQRPRSQAELKRTSFKKDKDGSEKKQPELFKALKMQTALSSVSYGRRTSIKSKISNITSFDQFDLLPSVRQSVYDSALPGLEYVTPTPIQRLAIPAILRQGSATPKPEEGQEDMPRFDQYLLAAETGSGKTLAYLLPVVDAIKRTEAKDKEEEERMAKEELEKEQEQAKEKNQNLFELESPGEEEEPINAPKSVVKPKAIILVPTSELVEQIGRIVKQLAHTVKYRSALLASNYTPRKIRKTLFNPNGLDILVTTPYLVASIAEANPYIFSRVTHLVVDEADSLFDKSFSPKTNTIIDRTAPTLKQLILCSATIPRSLDNRLRERFPQIRRLVTPNLHAIPRRVQLGVVDIDKEPYRGRRHLACADAIWSIGRSGNPYDADVGYQVTGQKEPKSIIVFVNERETAAEVAEFLVTKGINAVSLTRDTSEKRQAQILAEFTTEKNPPQPEDYKMLKGNRSDDDSVPFVNVRPGNERSNRLSNTKVLVVTDLGSRGIDTVAVKTVILYDVPHSTIDFIHRLGRLGRMGRRGRGIVLVGKKDRKDVVREVREAMYRGQALI</sequence>
<accession>Q1E9B7</accession>
<accession>I9NPJ8</accession>
<protein>
    <recommendedName>
        <fullName>ATP-dependent RNA helicase MRH4, mitochondrial</fullName>
        <ecNumber>3.6.4.13</ecNumber>
    </recommendedName>
</protein>
<comment type="function">
    <text evidence="1">ATP-binding RNA helicase involved in mitochondrial RNA metabolism. Required for maintenance of mitochondrial DNA (By similarity).</text>
</comment>
<comment type="catalytic activity">
    <reaction>
        <text>ATP + H2O = ADP + phosphate + H(+)</text>
        <dbReference type="Rhea" id="RHEA:13065"/>
        <dbReference type="ChEBI" id="CHEBI:15377"/>
        <dbReference type="ChEBI" id="CHEBI:15378"/>
        <dbReference type="ChEBI" id="CHEBI:30616"/>
        <dbReference type="ChEBI" id="CHEBI:43474"/>
        <dbReference type="ChEBI" id="CHEBI:456216"/>
        <dbReference type="EC" id="3.6.4.13"/>
    </reaction>
</comment>
<comment type="subcellular location">
    <subcellularLocation>
        <location evidence="1">Mitochondrion</location>
    </subcellularLocation>
</comment>
<comment type="domain">
    <text>The Q motif is unique to and characteristic of the DEAD box family of RNA helicases and controls ATP binding and hydrolysis.</text>
</comment>
<comment type="similarity">
    <text evidence="6">Belongs to the DEAD box helicase family. MRH4 subfamily.</text>
</comment>
<feature type="transit peptide" description="Mitochondrion" evidence="2">
    <location>
        <begin position="1"/>
        <end position="46"/>
    </location>
</feature>
<feature type="chain" id="PRO_0000256053" description="ATP-dependent RNA helicase MRH4, mitochondrial">
    <location>
        <begin position="47"/>
        <end position="656"/>
    </location>
</feature>
<feature type="domain" description="Helicase ATP-binding" evidence="3">
    <location>
        <begin position="210"/>
        <end position="431"/>
    </location>
</feature>
<feature type="domain" description="Helicase C-terminal" evidence="4">
    <location>
        <begin position="480"/>
        <end position="656"/>
    </location>
</feature>
<feature type="region of interest" description="Disordered" evidence="5">
    <location>
        <begin position="42"/>
        <end position="125"/>
    </location>
</feature>
<feature type="region of interest" description="Disordered" evidence="5">
    <location>
        <begin position="246"/>
        <end position="270"/>
    </location>
</feature>
<feature type="short sequence motif" description="Q motif">
    <location>
        <begin position="157"/>
        <end position="190"/>
    </location>
</feature>
<feature type="short sequence motif" description="DEAD box">
    <location>
        <begin position="378"/>
        <end position="381"/>
    </location>
</feature>
<feature type="compositionally biased region" description="Polar residues" evidence="5">
    <location>
        <begin position="60"/>
        <end position="71"/>
    </location>
</feature>
<feature type="compositionally biased region" description="Basic and acidic residues" evidence="5">
    <location>
        <begin position="96"/>
        <end position="125"/>
    </location>
</feature>
<feature type="binding site" evidence="3">
    <location>
        <begin position="223"/>
        <end position="230"/>
    </location>
    <ligand>
        <name>ATP</name>
        <dbReference type="ChEBI" id="CHEBI:30616"/>
    </ligand>
</feature>
<evidence type="ECO:0000250" key="1"/>
<evidence type="ECO:0000255" key="2"/>
<evidence type="ECO:0000255" key="3">
    <source>
        <dbReference type="PROSITE-ProRule" id="PRU00541"/>
    </source>
</evidence>
<evidence type="ECO:0000255" key="4">
    <source>
        <dbReference type="PROSITE-ProRule" id="PRU00542"/>
    </source>
</evidence>
<evidence type="ECO:0000256" key="5">
    <source>
        <dbReference type="SAM" id="MobiDB-lite"/>
    </source>
</evidence>
<evidence type="ECO:0000305" key="6"/>
<reference key="1">
    <citation type="journal article" date="2009" name="Genome Res.">
        <title>Comparative genomic analyses of the human fungal pathogens Coccidioides and their relatives.</title>
        <authorList>
            <person name="Sharpton T.J."/>
            <person name="Stajich J.E."/>
            <person name="Rounsley S.D."/>
            <person name="Gardner M.J."/>
            <person name="Wortman J.R."/>
            <person name="Jordar V.S."/>
            <person name="Maiti R."/>
            <person name="Kodira C.D."/>
            <person name="Neafsey D.E."/>
            <person name="Zeng Q."/>
            <person name="Hung C.-Y."/>
            <person name="McMahan C."/>
            <person name="Muszewska A."/>
            <person name="Grynberg M."/>
            <person name="Mandel M.A."/>
            <person name="Kellner E.M."/>
            <person name="Barker B.M."/>
            <person name="Galgiani J.N."/>
            <person name="Orbach M.J."/>
            <person name="Kirkland T.N."/>
            <person name="Cole G.T."/>
            <person name="Henn M.R."/>
            <person name="Birren B.W."/>
            <person name="Taylor J.W."/>
        </authorList>
    </citation>
    <scope>NUCLEOTIDE SEQUENCE [LARGE SCALE GENOMIC DNA]</scope>
    <source>
        <strain>RS</strain>
    </source>
</reference>
<reference key="2">
    <citation type="journal article" date="2010" name="Genome Res.">
        <title>Population genomic sequencing of Coccidioides fungi reveals recent hybridization and transposon control.</title>
        <authorList>
            <person name="Neafsey D.E."/>
            <person name="Barker B.M."/>
            <person name="Sharpton T.J."/>
            <person name="Stajich J.E."/>
            <person name="Park D.J."/>
            <person name="Whiston E."/>
            <person name="Hung C.-Y."/>
            <person name="McMahan C."/>
            <person name="White J."/>
            <person name="Sykes S."/>
            <person name="Heiman D."/>
            <person name="Young S."/>
            <person name="Zeng Q."/>
            <person name="Abouelleil A."/>
            <person name="Aftuck L."/>
            <person name="Bessette D."/>
            <person name="Brown A."/>
            <person name="FitzGerald M."/>
            <person name="Lui A."/>
            <person name="Macdonald J.P."/>
            <person name="Priest M."/>
            <person name="Orbach M.J."/>
            <person name="Galgiani J.N."/>
            <person name="Kirkland T.N."/>
            <person name="Cole G.T."/>
            <person name="Birren B.W."/>
            <person name="Henn M.R."/>
            <person name="Taylor J.W."/>
            <person name="Rounsley S.D."/>
        </authorList>
    </citation>
    <scope>GENOME REANNOTATION</scope>
    <source>
        <strain>RS</strain>
    </source>
</reference>
<dbReference type="EC" id="3.6.4.13"/>
<dbReference type="EMBL" id="GG704911">
    <property type="protein sequence ID" value="EAS35492.3"/>
    <property type="molecule type" value="Genomic_DNA"/>
</dbReference>
<dbReference type="RefSeq" id="XP_001247075.1">
    <property type="nucleotide sequence ID" value="XM_001247074.2"/>
</dbReference>
<dbReference type="SMR" id="Q1E9B7"/>
<dbReference type="FunCoup" id="Q1E9B7">
    <property type="interactions" value="118"/>
</dbReference>
<dbReference type="STRING" id="246410.Q1E9B7"/>
<dbReference type="GeneID" id="24164457"/>
<dbReference type="KEGG" id="cim:CIMG_12830"/>
<dbReference type="VEuPathDB" id="FungiDB:CIMG_12830"/>
<dbReference type="InParanoid" id="Q1E9B7"/>
<dbReference type="OMA" id="HSTIDFI"/>
<dbReference type="OrthoDB" id="10256233at2759"/>
<dbReference type="Proteomes" id="UP000001261">
    <property type="component" value="Unassembled WGS sequence"/>
</dbReference>
<dbReference type="GO" id="GO:0005739">
    <property type="term" value="C:mitochondrion"/>
    <property type="evidence" value="ECO:0007669"/>
    <property type="project" value="UniProtKB-SubCell"/>
</dbReference>
<dbReference type="GO" id="GO:0005524">
    <property type="term" value="F:ATP binding"/>
    <property type="evidence" value="ECO:0007669"/>
    <property type="project" value="UniProtKB-KW"/>
</dbReference>
<dbReference type="GO" id="GO:0016887">
    <property type="term" value="F:ATP hydrolysis activity"/>
    <property type="evidence" value="ECO:0007669"/>
    <property type="project" value="RHEA"/>
</dbReference>
<dbReference type="GO" id="GO:0003723">
    <property type="term" value="F:RNA binding"/>
    <property type="evidence" value="ECO:0007669"/>
    <property type="project" value="UniProtKB-KW"/>
</dbReference>
<dbReference type="GO" id="GO:0003724">
    <property type="term" value="F:RNA helicase activity"/>
    <property type="evidence" value="ECO:0007669"/>
    <property type="project" value="UniProtKB-EC"/>
</dbReference>
<dbReference type="Gene3D" id="3.40.50.300">
    <property type="entry name" value="P-loop containing nucleotide triphosphate hydrolases"/>
    <property type="match status" value="2"/>
</dbReference>
<dbReference type="InterPro" id="IPR011545">
    <property type="entry name" value="DEAD/DEAH_box_helicase_dom"/>
</dbReference>
<dbReference type="InterPro" id="IPR014001">
    <property type="entry name" value="Helicase_ATP-bd"/>
</dbReference>
<dbReference type="InterPro" id="IPR001650">
    <property type="entry name" value="Helicase_C-like"/>
</dbReference>
<dbReference type="InterPro" id="IPR027417">
    <property type="entry name" value="P-loop_NTPase"/>
</dbReference>
<dbReference type="InterPro" id="IPR014014">
    <property type="entry name" value="RNA_helicase_DEAD_Q_motif"/>
</dbReference>
<dbReference type="PANTHER" id="PTHR47960">
    <property type="entry name" value="DEAD-BOX ATP-DEPENDENT RNA HELICASE 50"/>
    <property type="match status" value="1"/>
</dbReference>
<dbReference type="Pfam" id="PF00270">
    <property type="entry name" value="DEAD"/>
    <property type="match status" value="1"/>
</dbReference>
<dbReference type="Pfam" id="PF00271">
    <property type="entry name" value="Helicase_C"/>
    <property type="match status" value="1"/>
</dbReference>
<dbReference type="SMART" id="SM00487">
    <property type="entry name" value="DEXDc"/>
    <property type="match status" value="1"/>
</dbReference>
<dbReference type="SMART" id="SM00490">
    <property type="entry name" value="HELICc"/>
    <property type="match status" value="1"/>
</dbReference>
<dbReference type="SUPFAM" id="SSF52540">
    <property type="entry name" value="P-loop containing nucleoside triphosphate hydrolases"/>
    <property type="match status" value="1"/>
</dbReference>
<dbReference type="PROSITE" id="PS51192">
    <property type="entry name" value="HELICASE_ATP_BIND_1"/>
    <property type="match status" value="1"/>
</dbReference>
<dbReference type="PROSITE" id="PS51194">
    <property type="entry name" value="HELICASE_CTER"/>
    <property type="match status" value="1"/>
</dbReference>
<dbReference type="PROSITE" id="PS51195">
    <property type="entry name" value="Q_MOTIF"/>
    <property type="match status" value="1"/>
</dbReference>
<keyword id="KW-0067">ATP-binding</keyword>
<keyword id="KW-0347">Helicase</keyword>
<keyword id="KW-0378">Hydrolase</keyword>
<keyword id="KW-0496">Mitochondrion</keyword>
<keyword id="KW-0547">Nucleotide-binding</keyword>
<keyword id="KW-1185">Reference proteome</keyword>
<keyword id="KW-0694">RNA-binding</keyword>
<keyword id="KW-0809">Transit peptide</keyword>
<name>MRH4_COCIM</name>